<keyword id="KW-1185">Reference proteome</keyword>
<keyword id="KW-0687">Ribonucleoprotein</keyword>
<keyword id="KW-0689">Ribosomal protein</keyword>
<keyword id="KW-0694">RNA-binding</keyword>
<keyword id="KW-0699">rRNA-binding</keyword>
<organism>
    <name type="scientific">Rhizorhabdus wittichii (strain DSM 6014 / CCUG 31198 / JCM 15750 / NBRC 105917 / EY 4224 / RW1)</name>
    <name type="common">Sphingomonas wittichii</name>
    <dbReference type="NCBI Taxonomy" id="392499"/>
    <lineage>
        <taxon>Bacteria</taxon>
        <taxon>Pseudomonadati</taxon>
        <taxon>Pseudomonadota</taxon>
        <taxon>Alphaproteobacteria</taxon>
        <taxon>Sphingomonadales</taxon>
        <taxon>Sphingomonadaceae</taxon>
        <taxon>Rhizorhabdus</taxon>
    </lineage>
</organism>
<reference key="1">
    <citation type="journal article" date="2010" name="J. Bacteriol.">
        <title>Genome sequence of the dioxin-mineralizing bacterium Sphingomonas wittichii RW1.</title>
        <authorList>
            <person name="Miller T.R."/>
            <person name="Delcher A.L."/>
            <person name="Salzberg S.L."/>
            <person name="Saunders E."/>
            <person name="Detter J.C."/>
            <person name="Halden R.U."/>
        </authorList>
    </citation>
    <scope>NUCLEOTIDE SEQUENCE [LARGE SCALE GENOMIC DNA]</scope>
    <source>
        <strain>DSM 6014 / CCUG 31198 / JCM 15750 / NBRC 105917 / EY 4224 / RW1</strain>
    </source>
</reference>
<gene>
    <name evidence="1" type="primary">rpsC</name>
    <name type="ordered locus">Swit_1347</name>
</gene>
<feature type="chain" id="PRO_1000086163" description="Small ribosomal subunit protein uS3">
    <location>
        <begin position="1"/>
        <end position="231"/>
    </location>
</feature>
<feature type="domain" description="KH type-2" evidence="1">
    <location>
        <begin position="39"/>
        <end position="107"/>
    </location>
</feature>
<protein>
    <recommendedName>
        <fullName evidence="1">Small ribosomal subunit protein uS3</fullName>
    </recommendedName>
    <alternativeName>
        <fullName evidence="2">30S ribosomal protein S3</fullName>
    </alternativeName>
</protein>
<sequence>MGQKSNPIGMRLQINRTWDSRWYADGADYGRLLLEDLKIRKHIMKAIPQAAISKVVIERPAKLCRISVYAARPGVIIGKKGADIEKLRRALGKMTSSDVSLNIVEIRKPEIDSKLVAQGVADQLERRIAFRRAMKRAVQSALRLGAEGIRITCAGRLGGAEIARTEWYREGRVPLHTLRANVDYAEAEAHTAYGVCGIKVWIFKGEILGHDPLAQDRLMMEAQTSGVRPAR</sequence>
<evidence type="ECO:0000255" key="1">
    <source>
        <dbReference type="HAMAP-Rule" id="MF_01309"/>
    </source>
</evidence>
<evidence type="ECO:0000305" key="2"/>
<dbReference type="EMBL" id="CP000699">
    <property type="protein sequence ID" value="ABQ67712.1"/>
    <property type="molecule type" value="Genomic_DNA"/>
</dbReference>
<dbReference type="SMR" id="A5V5Z6"/>
<dbReference type="STRING" id="392499.Swit_1347"/>
<dbReference type="PaxDb" id="392499-Swit_1347"/>
<dbReference type="KEGG" id="swi:Swit_1347"/>
<dbReference type="eggNOG" id="COG0092">
    <property type="taxonomic scope" value="Bacteria"/>
</dbReference>
<dbReference type="HOGENOM" id="CLU_058591_0_2_5"/>
<dbReference type="OrthoDB" id="9806396at2"/>
<dbReference type="Proteomes" id="UP000001989">
    <property type="component" value="Chromosome"/>
</dbReference>
<dbReference type="GO" id="GO:0022627">
    <property type="term" value="C:cytosolic small ribosomal subunit"/>
    <property type="evidence" value="ECO:0007669"/>
    <property type="project" value="TreeGrafter"/>
</dbReference>
<dbReference type="GO" id="GO:0003729">
    <property type="term" value="F:mRNA binding"/>
    <property type="evidence" value="ECO:0007669"/>
    <property type="project" value="UniProtKB-UniRule"/>
</dbReference>
<dbReference type="GO" id="GO:0019843">
    <property type="term" value="F:rRNA binding"/>
    <property type="evidence" value="ECO:0007669"/>
    <property type="project" value="UniProtKB-UniRule"/>
</dbReference>
<dbReference type="GO" id="GO:0003735">
    <property type="term" value="F:structural constituent of ribosome"/>
    <property type="evidence" value="ECO:0007669"/>
    <property type="project" value="InterPro"/>
</dbReference>
<dbReference type="GO" id="GO:0006412">
    <property type="term" value="P:translation"/>
    <property type="evidence" value="ECO:0007669"/>
    <property type="project" value="UniProtKB-UniRule"/>
</dbReference>
<dbReference type="CDD" id="cd02412">
    <property type="entry name" value="KH-II_30S_S3"/>
    <property type="match status" value="1"/>
</dbReference>
<dbReference type="FunFam" id="3.30.1140.32:FF:000002">
    <property type="entry name" value="30S ribosomal protein S3"/>
    <property type="match status" value="1"/>
</dbReference>
<dbReference type="FunFam" id="3.30.300.20:FF:000001">
    <property type="entry name" value="30S ribosomal protein S3"/>
    <property type="match status" value="1"/>
</dbReference>
<dbReference type="Gene3D" id="3.30.300.20">
    <property type="match status" value="1"/>
</dbReference>
<dbReference type="Gene3D" id="3.30.1140.32">
    <property type="entry name" value="Ribosomal protein S3, C-terminal domain"/>
    <property type="match status" value="1"/>
</dbReference>
<dbReference type="HAMAP" id="MF_01309_B">
    <property type="entry name" value="Ribosomal_uS3_B"/>
    <property type="match status" value="1"/>
</dbReference>
<dbReference type="InterPro" id="IPR004087">
    <property type="entry name" value="KH_dom"/>
</dbReference>
<dbReference type="InterPro" id="IPR015946">
    <property type="entry name" value="KH_dom-like_a/b"/>
</dbReference>
<dbReference type="InterPro" id="IPR004044">
    <property type="entry name" value="KH_dom_type_2"/>
</dbReference>
<dbReference type="InterPro" id="IPR009019">
    <property type="entry name" value="KH_sf_prok-type"/>
</dbReference>
<dbReference type="InterPro" id="IPR036419">
    <property type="entry name" value="Ribosomal_S3_C_sf"/>
</dbReference>
<dbReference type="InterPro" id="IPR005704">
    <property type="entry name" value="Ribosomal_uS3_bac-typ"/>
</dbReference>
<dbReference type="InterPro" id="IPR001351">
    <property type="entry name" value="Ribosomal_uS3_C"/>
</dbReference>
<dbReference type="InterPro" id="IPR018280">
    <property type="entry name" value="Ribosomal_uS3_CS"/>
</dbReference>
<dbReference type="NCBIfam" id="TIGR01009">
    <property type="entry name" value="rpsC_bact"/>
    <property type="match status" value="1"/>
</dbReference>
<dbReference type="PANTHER" id="PTHR11760">
    <property type="entry name" value="30S/40S RIBOSOMAL PROTEIN S3"/>
    <property type="match status" value="1"/>
</dbReference>
<dbReference type="PANTHER" id="PTHR11760:SF19">
    <property type="entry name" value="SMALL RIBOSOMAL SUBUNIT PROTEIN US3C"/>
    <property type="match status" value="1"/>
</dbReference>
<dbReference type="Pfam" id="PF07650">
    <property type="entry name" value="KH_2"/>
    <property type="match status" value="1"/>
</dbReference>
<dbReference type="Pfam" id="PF00189">
    <property type="entry name" value="Ribosomal_S3_C"/>
    <property type="match status" value="1"/>
</dbReference>
<dbReference type="SMART" id="SM00322">
    <property type="entry name" value="KH"/>
    <property type="match status" value="1"/>
</dbReference>
<dbReference type="SUPFAM" id="SSF54814">
    <property type="entry name" value="Prokaryotic type KH domain (KH-domain type II)"/>
    <property type="match status" value="1"/>
</dbReference>
<dbReference type="SUPFAM" id="SSF54821">
    <property type="entry name" value="Ribosomal protein S3 C-terminal domain"/>
    <property type="match status" value="1"/>
</dbReference>
<dbReference type="PROSITE" id="PS50823">
    <property type="entry name" value="KH_TYPE_2"/>
    <property type="match status" value="1"/>
</dbReference>
<dbReference type="PROSITE" id="PS00548">
    <property type="entry name" value="RIBOSOMAL_S3"/>
    <property type="match status" value="1"/>
</dbReference>
<name>RS3_RHIWR</name>
<comment type="function">
    <text evidence="1">Binds the lower part of the 30S subunit head. Binds mRNA in the 70S ribosome, positioning it for translation.</text>
</comment>
<comment type="subunit">
    <text evidence="1">Part of the 30S ribosomal subunit. Forms a tight complex with proteins S10 and S14.</text>
</comment>
<comment type="similarity">
    <text evidence="1">Belongs to the universal ribosomal protein uS3 family.</text>
</comment>
<proteinExistence type="inferred from homology"/>
<accession>A5V5Z6</accession>